<accession>P82065</accession>
<comment type="function">
    <text>May act as a neuromodulator or neurotransmitter.</text>
</comment>
<comment type="subcellular location">
    <subcellularLocation>
        <location>Secreted</location>
    </subcellularLocation>
</comment>
<comment type="tissue specificity">
    <text>Expressed by the skin dorsal glands.</text>
</comment>
<comment type="mass spectrometry"/>
<comment type="similarity">
    <text evidence="2">Belongs to the frog skin active peptide (FSAP) family. Tryptophillin subfamily.</text>
</comment>
<dbReference type="GO" id="GO:0005576">
    <property type="term" value="C:extracellular region"/>
    <property type="evidence" value="ECO:0007669"/>
    <property type="project" value="UniProtKB-SubCell"/>
</dbReference>
<dbReference type="GO" id="GO:0006952">
    <property type="term" value="P:defense response"/>
    <property type="evidence" value="ECO:0007669"/>
    <property type="project" value="UniProtKB-KW"/>
</dbReference>
<dbReference type="GO" id="GO:0007218">
    <property type="term" value="P:neuropeptide signaling pathway"/>
    <property type="evidence" value="ECO:0007669"/>
    <property type="project" value="UniProtKB-KW"/>
</dbReference>
<organism>
    <name type="scientific">Litoria rubella</name>
    <name type="common">Desert tree frog</name>
    <name type="synonym">Hyla rubella</name>
    <dbReference type="NCBI Taxonomy" id="104895"/>
    <lineage>
        <taxon>Eukaryota</taxon>
        <taxon>Metazoa</taxon>
        <taxon>Chordata</taxon>
        <taxon>Craniata</taxon>
        <taxon>Vertebrata</taxon>
        <taxon>Euteleostomi</taxon>
        <taxon>Amphibia</taxon>
        <taxon>Batrachia</taxon>
        <taxon>Anura</taxon>
        <taxon>Neobatrachia</taxon>
        <taxon>Hyloidea</taxon>
        <taxon>Hylidae</taxon>
        <taxon>Pelodryadinae</taxon>
        <taxon>Litoria</taxon>
    </lineage>
</organism>
<feature type="peptide" id="PRO_0000043842" description="Tryptophyllin-5.1">
    <location>
        <begin position="1"/>
        <end position="7"/>
    </location>
</feature>
<feature type="modified residue" description="Pyrrolidone carboxylic acid" evidence="1">
    <location>
        <position position="1"/>
    </location>
</feature>
<feature type="modified residue" description="Arginine amide" evidence="1">
    <location>
        <position position="7"/>
    </location>
</feature>
<name>TY51_LITRU</name>
<protein>
    <recommendedName>
        <fullName>Tryptophyllin-5.1</fullName>
    </recommendedName>
</protein>
<keyword id="KW-0027">Amidation</keyword>
<keyword id="KW-0878">Amphibian defense peptide</keyword>
<keyword id="KW-0903">Direct protein sequencing</keyword>
<keyword id="KW-0527">Neuropeptide</keyword>
<keyword id="KW-0873">Pyrrolidone carboxylic acid</keyword>
<keyword id="KW-0964">Secreted</keyword>
<sequence>QIPWFHR</sequence>
<evidence type="ECO:0000269" key="1">
    <source ref="1"/>
</evidence>
<evidence type="ECO:0000305" key="2"/>
<reference key="1">
    <citation type="journal article" date="1996" name="Aust. J. Chem.">
        <title>The structure of new peptides from the Australin red tree frog 'Litoria rubella'. The skin peptide profile as a probe for the study of evolutionary trends of amphibians.</title>
        <authorList>
            <person name="Steinborner S.T."/>
            <person name="Wabnitz P.A."/>
            <person name="Waugh R.J."/>
            <person name="Bowie J.H."/>
            <person name="Gao C."/>
            <person name="Tyler M.J."/>
            <person name="Wallace J.C."/>
        </authorList>
    </citation>
    <scope>PROTEIN SEQUENCE</scope>
    <scope>PYROGLUTAMATE FORMATION AT GLN-1</scope>
    <scope>AMIDATION AT ARG-7</scope>
    <scope>MASS SPECTROMETRY</scope>
    <source>
        <tissue>Skin secretion</tissue>
    </source>
</reference>
<proteinExistence type="evidence at protein level"/>